<sequence>MGDVEKGKKIFVQKCAQCHTVEKGGKHKTGPNLHGLFGRKTGQAPGFSYTDANKNKGITWGEETLMEYLENPKKYIPGTKMIFAGIKKKGEREDLIAYLKKATNE</sequence>
<protein>
    <recommendedName>
        <fullName>Cytochrome c</fullName>
    </recommendedName>
</protein>
<comment type="function">
    <text>Electron carrier protein. The oxidized form of the cytochrome c heme group can accept an electron from the heme group of the cytochrome c1 subunit of cytochrome reductase. Cytochrome c then transfers this electron to the cytochrome oxidase complex, the final protein carrier in the mitochondrial electron-transport chain.</text>
</comment>
<comment type="function">
    <text evidence="1">Plays a role in apoptosis. Suppression of the anti-apoptotic members or activation of the pro-apoptotic members of the Bcl-2 family leads to altered mitochondrial membrane permeability resulting in release of cytochrome c into the cytosol. Binding of cytochrome c to Apaf-1 triggers the activation of caspase-9, which then accelerates apoptosis by activating other caspases (By similarity).</text>
</comment>
<comment type="subcellular location">
    <subcellularLocation>
        <location>Mitochondrion intermembrane space</location>
    </subcellularLocation>
    <text>Loosely associated with the inner membrane.</text>
</comment>
<comment type="PTM">
    <text>Binds 1 heme c group covalently per subunit.</text>
</comment>
<comment type="PTM">
    <text evidence="1">Phosphorylation at Tyr-49 and Tyr-98 both reduce by half the turnover in the reaction with cytochrome c oxidase, down-regulating mitochondrial respiration.</text>
</comment>
<comment type="similarity">
    <text evidence="5">Belongs to the cytochrome c family.</text>
</comment>
<comment type="online information" name="Protein Spotlight">
    <link uri="https://www.proteinspotlight.org/back_issues/076"/>
    <text>Life shuttle - Issue 76 of November 2006</text>
</comment>
<evidence type="ECO:0000250" key="1"/>
<evidence type="ECO:0000250" key="2">
    <source>
        <dbReference type="UniProtKB" id="P62894"/>
    </source>
</evidence>
<evidence type="ECO:0000250" key="3">
    <source>
        <dbReference type="UniProtKB" id="P62897"/>
    </source>
</evidence>
<evidence type="ECO:0000269" key="4">
    <source>
    </source>
</evidence>
<evidence type="ECO:0000305" key="5"/>
<evidence type="ECO:0007829" key="6">
    <source>
        <dbReference type="PDB" id="8DVX"/>
    </source>
</evidence>
<feature type="initiator methionine" description="Removed" evidence="2 4">
    <location>
        <position position="1"/>
    </location>
</feature>
<feature type="chain" id="PRO_0000108228" description="Cytochrome c">
    <location>
        <begin position="2"/>
        <end position="105"/>
    </location>
</feature>
<feature type="binding site" description="covalent">
    <location>
        <position position="15"/>
    </location>
    <ligand>
        <name>heme c</name>
        <dbReference type="ChEBI" id="CHEBI:61717"/>
    </ligand>
</feature>
<feature type="binding site" description="covalent">
    <location>
        <position position="18"/>
    </location>
    <ligand>
        <name>heme c</name>
        <dbReference type="ChEBI" id="CHEBI:61717"/>
    </ligand>
</feature>
<feature type="binding site" description="axial binding residue">
    <location>
        <position position="19"/>
    </location>
    <ligand>
        <name>heme c</name>
        <dbReference type="ChEBI" id="CHEBI:61717"/>
    </ligand>
    <ligandPart>
        <name>Fe</name>
        <dbReference type="ChEBI" id="CHEBI:18248"/>
    </ligandPart>
</feature>
<feature type="binding site" description="axial binding residue">
    <location>
        <position position="81"/>
    </location>
    <ligand>
        <name>heme c</name>
        <dbReference type="ChEBI" id="CHEBI:61717"/>
    </ligand>
    <ligandPart>
        <name>Fe</name>
        <dbReference type="ChEBI" id="CHEBI:18248"/>
    </ligandPart>
</feature>
<feature type="modified residue" description="N-acetylglycine" evidence="2">
    <location>
        <position position="2"/>
    </location>
</feature>
<feature type="modified residue" description="Phosphotyrosine" evidence="2">
    <location>
        <position position="49"/>
    </location>
</feature>
<feature type="modified residue" description="N6-succinyllysine" evidence="3">
    <location>
        <position position="56"/>
    </location>
</feature>
<feature type="modified residue" description="N6-acetyllysine; alternate" evidence="3">
    <location>
        <position position="73"/>
    </location>
</feature>
<feature type="modified residue" description="N6-succinyllysine; alternate" evidence="3">
    <location>
        <position position="73"/>
    </location>
</feature>
<feature type="modified residue" description="Phosphotyrosine" evidence="2">
    <location>
        <position position="98"/>
    </location>
</feature>
<feature type="modified residue" description="N6-acetyllysine" evidence="3">
    <location>
        <position position="100"/>
    </location>
</feature>
<feature type="helix" evidence="6">
    <location>
        <begin position="4"/>
        <end position="14"/>
    </location>
</feature>
<feature type="turn" evidence="6">
    <location>
        <begin position="15"/>
        <end position="18"/>
    </location>
</feature>
<feature type="helix" evidence="6">
    <location>
        <begin position="51"/>
        <end position="55"/>
    </location>
</feature>
<feature type="helix" evidence="6">
    <location>
        <begin position="62"/>
        <end position="70"/>
    </location>
</feature>
<feature type="helix" evidence="6">
    <location>
        <begin position="72"/>
        <end position="75"/>
    </location>
</feature>
<feature type="helix" evidence="6">
    <location>
        <begin position="89"/>
        <end position="102"/>
    </location>
</feature>
<reference key="1">
    <citation type="submission" date="2004-12" db="EMBL/GenBank/DDBJ databases">
        <title>Isolation and prediction of one novel swine gene that is differentially expressed in the longissimus dorsi muscle tissues from Landrace Large White cross combination.</title>
        <authorList>
            <person name="Liu G.Y."/>
            <person name="Xiong Z.Y."/>
        </authorList>
    </citation>
    <scope>NUCLEOTIDE SEQUENCE [MRNA]</scope>
</reference>
<reference key="2">
    <citation type="journal article" date="1965" name="Can. J. Biochem.">
        <title>The primary structure of the cytochrome c from various organs of the hog.</title>
        <authorList>
            <person name="Stewart J.W."/>
            <person name="Margoliash E."/>
        </authorList>
    </citation>
    <scope>PROTEIN SEQUENCE OF 2-105</scope>
</reference>
<accession>P62895</accession>
<accession>P00006</accession>
<accession>Q56P24</accession>
<gene>
    <name type="primary">CYCS</name>
    <name type="synonym">CYC</name>
</gene>
<name>CYC_PIG</name>
<proteinExistence type="evidence at protein level"/>
<dbReference type="EMBL" id="AY864613">
    <property type="protein sequence ID" value="AAX77008.1"/>
    <property type="molecule type" value="mRNA"/>
</dbReference>
<dbReference type="PIR" id="A00007">
    <property type="entry name" value="CCPG"/>
</dbReference>
<dbReference type="RefSeq" id="NP_001123442.1">
    <property type="nucleotide sequence ID" value="NM_001129970.1"/>
</dbReference>
<dbReference type="PDB" id="8DVX">
    <property type="method" value="X-ray"/>
    <property type="resolution" value="1.50 A"/>
    <property type="chains" value="A/B/C/D=2-105"/>
</dbReference>
<dbReference type="PDBsum" id="8DVX"/>
<dbReference type="BMRB" id="P62895"/>
<dbReference type="SMR" id="P62895"/>
<dbReference type="FunCoup" id="P62895">
    <property type="interactions" value="1608"/>
</dbReference>
<dbReference type="STRING" id="9823.ENSSSCP00000017704"/>
<dbReference type="iPTMnet" id="P62895"/>
<dbReference type="PaxDb" id="9823-ENSSSCP00000017704"/>
<dbReference type="PeptideAtlas" id="P62895"/>
<dbReference type="Ensembl" id="ENSSSCT00000018195.4">
    <property type="protein sequence ID" value="ENSSSCP00000017704.2"/>
    <property type="gene ID" value="ENSSSCG00000016714.4"/>
</dbReference>
<dbReference type="Ensembl" id="ENSSSCT00015077795.1">
    <property type="protein sequence ID" value="ENSSSCP00015031338.1"/>
    <property type="gene ID" value="ENSSSCG00015058229.1"/>
</dbReference>
<dbReference type="Ensembl" id="ENSSSCT00025016702.1">
    <property type="protein sequence ID" value="ENSSSCP00025006661.1"/>
    <property type="gene ID" value="ENSSSCG00025012632.1"/>
</dbReference>
<dbReference type="Ensembl" id="ENSSSCT00030003474.1">
    <property type="protein sequence ID" value="ENSSSCP00030001365.1"/>
    <property type="gene ID" value="ENSSSCG00030002705.1"/>
</dbReference>
<dbReference type="Ensembl" id="ENSSSCT00035099861.1">
    <property type="protein sequence ID" value="ENSSSCP00035042328.1"/>
    <property type="gene ID" value="ENSSSCG00035073660.1"/>
</dbReference>
<dbReference type="Ensembl" id="ENSSSCT00040010932.1">
    <property type="protein sequence ID" value="ENSSSCP00040004216.1"/>
    <property type="gene ID" value="ENSSSCG00040008367.1"/>
</dbReference>
<dbReference type="Ensembl" id="ENSSSCT00045028997.1">
    <property type="protein sequence ID" value="ENSSSCP00045020076.1"/>
    <property type="gene ID" value="ENSSSCG00045017039.1"/>
</dbReference>
<dbReference type="Ensembl" id="ENSSSCT00050065643.1">
    <property type="protein sequence ID" value="ENSSSCP00050028275.1"/>
    <property type="gene ID" value="ENSSSCG00050048183.1"/>
</dbReference>
<dbReference type="Ensembl" id="ENSSSCT00055004346.1">
    <property type="protein sequence ID" value="ENSSSCP00055003333.1"/>
    <property type="gene ID" value="ENSSSCG00055002302.1"/>
</dbReference>
<dbReference type="Ensembl" id="ENSSSCT00060046609.1">
    <property type="protein sequence ID" value="ENSSSCP00060019964.1"/>
    <property type="gene ID" value="ENSSSCG00060034366.1"/>
</dbReference>
<dbReference type="Ensembl" id="ENSSSCT00065048025.1">
    <property type="protein sequence ID" value="ENSSSCP00065020701.1"/>
    <property type="gene ID" value="ENSSSCG00065035264.1"/>
</dbReference>
<dbReference type="Ensembl" id="ENSSSCT00070027397.1">
    <property type="protein sequence ID" value="ENSSSCP00070022790.1"/>
    <property type="gene ID" value="ENSSSCG00070014000.1"/>
</dbReference>
<dbReference type="Ensembl" id="ENSSSCT00085001785">
    <property type="protein sequence ID" value="ENSSSCP00085001308"/>
    <property type="gene ID" value="ENSSSCG00085001250"/>
</dbReference>
<dbReference type="Ensembl" id="ENSSSCT00090002692">
    <property type="protein sequence ID" value="ENSSSCP00090001539"/>
    <property type="gene ID" value="ENSSSCG00090001684"/>
</dbReference>
<dbReference type="Ensembl" id="ENSSSCT00105020294">
    <property type="protein sequence ID" value="ENSSSCP00105014628"/>
    <property type="gene ID" value="ENSSSCG00105010151"/>
</dbReference>
<dbReference type="Ensembl" id="ENSSSCT00110074260">
    <property type="protein sequence ID" value="ENSSSCP00110052452"/>
    <property type="gene ID" value="ENSSSCG00110038886"/>
</dbReference>
<dbReference type="Ensembl" id="ENSSSCT00115030070">
    <property type="protein sequence ID" value="ENSSSCP00115028571"/>
    <property type="gene ID" value="ENSSSCG00115017102"/>
</dbReference>
<dbReference type="Ensembl" id="ENSSSCT00130000756">
    <property type="protein sequence ID" value="ENSSSCP00130000472"/>
    <property type="gene ID" value="ENSSSCG00130000465"/>
</dbReference>
<dbReference type="GeneID" id="100170131"/>
<dbReference type="KEGG" id="ssc:100170131"/>
<dbReference type="CTD" id="54205"/>
<dbReference type="eggNOG" id="KOG3453">
    <property type="taxonomic scope" value="Eukaryota"/>
</dbReference>
<dbReference type="GeneTree" id="ENSGT00940000157883"/>
<dbReference type="HOGENOM" id="CLU_060944_3_0_1"/>
<dbReference type="InParanoid" id="P62895"/>
<dbReference type="OMA" id="MPAPYKK"/>
<dbReference type="OrthoDB" id="449280at2759"/>
<dbReference type="TreeFam" id="TF300226"/>
<dbReference type="Reactome" id="R-SSC-111457">
    <property type="pathway name" value="Release of apoptotic factors from the mitochondria"/>
</dbReference>
<dbReference type="Reactome" id="R-SSC-111458">
    <property type="pathway name" value="Formation of apoptosome"/>
</dbReference>
<dbReference type="Reactome" id="R-SSC-111459">
    <property type="pathway name" value="Activation of caspases through apoptosome-mediated cleavage"/>
</dbReference>
<dbReference type="Reactome" id="R-SSC-2151201">
    <property type="pathway name" value="Transcriptional activation of mitochondrial biogenesis"/>
</dbReference>
<dbReference type="Reactome" id="R-SSC-3299685">
    <property type="pathway name" value="Detoxification of Reactive Oxygen Species"/>
</dbReference>
<dbReference type="Reactome" id="R-SSC-5620971">
    <property type="pathway name" value="Pyroptosis"/>
</dbReference>
<dbReference type="Reactome" id="R-SSC-5628897">
    <property type="pathway name" value="TP53 Regulates Metabolic Genes"/>
</dbReference>
<dbReference type="Reactome" id="R-SSC-611105">
    <property type="pathway name" value="Respiratory electron transport"/>
</dbReference>
<dbReference type="Reactome" id="R-SSC-9627069">
    <property type="pathway name" value="Regulation of the apoptosome activity"/>
</dbReference>
<dbReference type="Reactome" id="R-SSC-9707564">
    <property type="pathway name" value="Cytoprotection by HMOX1"/>
</dbReference>
<dbReference type="Proteomes" id="UP000008227">
    <property type="component" value="Chromosome 18"/>
</dbReference>
<dbReference type="Proteomes" id="UP000314985">
    <property type="component" value="Chromosome 18"/>
</dbReference>
<dbReference type="Proteomes" id="UP000694570">
    <property type="component" value="Unplaced"/>
</dbReference>
<dbReference type="Proteomes" id="UP000694571">
    <property type="component" value="Unplaced"/>
</dbReference>
<dbReference type="Proteomes" id="UP000694720">
    <property type="component" value="Unplaced"/>
</dbReference>
<dbReference type="Proteomes" id="UP000694722">
    <property type="component" value="Unplaced"/>
</dbReference>
<dbReference type="Proteomes" id="UP000694723">
    <property type="component" value="Unplaced"/>
</dbReference>
<dbReference type="Proteomes" id="UP000694724">
    <property type="component" value="Unplaced"/>
</dbReference>
<dbReference type="Proteomes" id="UP000694725">
    <property type="component" value="Unplaced"/>
</dbReference>
<dbReference type="Proteomes" id="UP000694726">
    <property type="component" value="Unplaced"/>
</dbReference>
<dbReference type="Proteomes" id="UP000694727">
    <property type="component" value="Unplaced"/>
</dbReference>
<dbReference type="Proteomes" id="UP000694728">
    <property type="component" value="Unplaced"/>
</dbReference>
<dbReference type="Bgee" id="ENSSSCG00000016714">
    <property type="expression patterns" value="Expressed in heart left ventricle and 44 other cell types or tissues"/>
</dbReference>
<dbReference type="GO" id="GO:0005758">
    <property type="term" value="C:mitochondrial intermembrane space"/>
    <property type="evidence" value="ECO:0000318"/>
    <property type="project" value="GO_Central"/>
</dbReference>
<dbReference type="GO" id="GO:0009055">
    <property type="term" value="F:electron transfer activity"/>
    <property type="evidence" value="ECO:0000318"/>
    <property type="project" value="GO_Central"/>
</dbReference>
<dbReference type="GO" id="GO:0020037">
    <property type="term" value="F:heme binding"/>
    <property type="evidence" value="ECO:0007669"/>
    <property type="project" value="InterPro"/>
</dbReference>
<dbReference type="GO" id="GO:0046872">
    <property type="term" value="F:metal ion binding"/>
    <property type="evidence" value="ECO:0007669"/>
    <property type="project" value="UniProtKB-KW"/>
</dbReference>
<dbReference type="GO" id="GO:0006915">
    <property type="term" value="P:apoptotic process"/>
    <property type="evidence" value="ECO:0007669"/>
    <property type="project" value="UniProtKB-KW"/>
</dbReference>
<dbReference type="GO" id="GO:0006123">
    <property type="term" value="P:mitochondrial electron transport, cytochrome c to oxygen"/>
    <property type="evidence" value="ECO:0000318"/>
    <property type="project" value="GO_Central"/>
</dbReference>
<dbReference type="GO" id="GO:0006122">
    <property type="term" value="P:mitochondrial electron transport, ubiquinol to cytochrome c"/>
    <property type="evidence" value="ECO:0000318"/>
    <property type="project" value="GO_Central"/>
</dbReference>
<dbReference type="FunFam" id="1.10.760.10:FF:000008">
    <property type="entry name" value="Cytochrome c"/>
    <property type="match status" value="1"/>
</dbReference>
<dbReference type="Gene3D" id="1.10.760.10">
    <property type="entry name" value="Cytochrome c-like domain"/>
    <property type="match status" value="1"/>
</dbReference>
<dbReference type="InterPro" id="IPR009056">
    <property type="entry name" value="Cyt_c-like_dom"/>
</dbReference>
<dbReference type="InterPro" id="IPR036909">
    <property type="entry name" value="Cyt_c-like_dom_sf"/>
</dbReference>
<dbReference type="InterPro" id="IPR002327">
    <property type="entry name" value="Cyt_c_1A/1B"/>
</dbReference>
<dbReference type="PANTHER" id="PTHR11961">
    <property type="entry name" value="CYTOCHROME C"/>
    <property type="match status" value="1"/>
</dbReference>
<dbReference type="Pfam" id="PF00034">
    <property type="entry name" value="Cytochrom_C"/>
    <property type="match status" value="1"/>
</dbReference>
<dbReference type="PRINTS" id="PR00604">
    <property type="entry name" value="CYTCHRMECIAB"/>
</dbReference>
<dbReference type="SUPFAM" id="SSF46626">
    <property type="entry name" value="Cytochrome c"/>
    <property type="match status" value="1"/>
</dbReference>
<dbReference type="PROSITE" id="PS51007">
    <property type="entry name" value="CYTC"/>
    <property type="match status" value="1"/>
</dbReference>
<organism>
    <name type="scientific">Sus scrofa</name>
    <name type="common">Pig</name>
    <dbReference type="NCBI Taxonomy" id="9823"/>
    <lineage>
        <taxon>Eukaryota</taxon>
        <taxon>Metazoa</taxon>
        <taxon>Chordata</taxon>
        <taxon>Craniata</taxon>
        <taxon>Vertebrata</taxon>
        <taxon>Euteleostomi</taxon>
        <taxon>Mammalia</taxon>
        <taxon>Eutheria</taxon>
        <taxon>Laurasiatheria</taxon>
        <taxon>Artiodactyla</taxon>
        <taxon>Suina</taxon>
        <taxon>Suidae</taxon>
        <taxon>Sus</taxon>
    </lineage>
</organism>
<keyword id="KW-0002">3D-structure</keyword>
<keyword id="KW-0007">Acetylation</keyword>
<keyword id="KW-0053">Apoptosis</keyword>
<keyword id="KW-0903">Direct protein sequencing</keyword>
<keyword id="KW-0249">Electron transport</keyword>
<keyword id="KW-0349">Heme</keyword>
<keyword id="KW-0408">Iron</keyword>
<keyword id="KW-0479">Metal-binding</keyword>
<keyword id="KW-0496">Mitochondrion</keyword>
<keyword id="KW-0597">Phosphoprotein</keyword>
<keyword id="KW-1185">Reference proteome</keyword>
<keyword id="KW-0679">Respiratory chain</keyword>
<keyword id="KW-0813">Transport</keyword>